<sequence length="319" mass="35933">MRKNEYVNLPVICLVGPTASGKSGLAVRVCRRLYVDEHPAEIINTDSMVVYRGMDIGTATPTLREQRTVVHHLVSILDVTVPSSLVLMQTLARDAVEDCLSRGVIPVLVGGSALYTKAIIDEMSIPPTDPEVRARWQEKLDAEGPRVLHDELARRDPKAAESILPGNGRRIVRALEVIDLTGSFTATIPDGTLHWPKTVQMGLELSRKDIDQRIADRVDQMWAYGFVDEVRSLANVGLREGLTASRALGYRQVLEYLNGDYDEDEARRRTIIGTRRFARKQLMWYRRDDRIEWFNALAPDLDDRVVARVLTALTTDEED</sequence>
<protein>
    <recommendedName>
        <fullName evidence="1">tRNA dimethylallyltransferase</fullName>
        <ecNumber evidence="1">2.5.1.75</ecNumber>
    </recommendedName>
    <alternativeName>
        <fullName evidence="1">Dimethylallyl diphosphate:tRNA dimethylallyltransferase</fullName>
        <shortName evidence="1">DMAPP:tRNA dimethylallyltransferase</shortName>
        <shortName evidence="1">DMATase</shortName>
    </alternativeName>
    <alternativeName>
        <fullName evidence="1">Isopentenyl-diphosphate:tRNA isopentenyltransferase</fullName>
        <shortName evidence="1">IPP transferase</shortName>
        <shortName evidence="1">IPPT</shortName>
        <shortName evidence="1">IPTase</shortName>
    </alternativeName>
</protein>
<comment type="function">
    <text evidence="1">Catalyzes the transfer of a dimethylallyl group onto the adenine at position 37 in tRNAs that read codons beginning with uridine, leading to the formation of N6-(dimethylallyl)adenosine (i(6)A).</text>
</comment>
<comment type="catalytic activity">
    <reaction evidence="1">
        <text>adenosine(37) in tRNA + dimethylallyl diphosphate = N(6)-dimethylallyladenosine(37) in tRNA + diphosphate</text>
        <dbReference type="Rhea" id="RHEA:26482"/>
        <dbReference type="Rhea" id="RHEA-COMP:10162"/>
        <dbReference type="Rhea" id="RHEA-COMP:10375"/>
        <dbReference type="ChEBI" id="CHEBI:33019"/>
        <dbReference type="ChEBI" id="CHEBI:57623"/>
        <dbReference type="ChEBI" id="CHEBI:74411"/>
        <dbReference type="ChEBI" id="CHEBI:74415"/>
        <dbReference type="EC" id="2.5.1.75"/>
    </reaction>
</comment>
<comment type="cofactor">
    <cofactor evidence="1">
        <name>Mg(2+)</name>
        <dbReference type="ChEBI" id="CHEBI:18420"/>
    </cofactor>
</comment>
<comment type="subunit">
    <text evidence="1">Monomer.</text>
</comment>
<comment type="similarity">
    <text evidence="1">Belongs to the IPP transferase family.</text>
</comment>
<keyword id="KW-0067">ATP-binding</keyword>
<keyword id="KW-0460">Magnesium</keyword>
<keyword id="KW-0547">Nucleotide-binding</keyword>
<keyword id="KW-0808">Transferase</keyword>
<keyword id="KW-0819">tRNA processing</keyword>
<dbReference type="EC" id="2.5.1.75" evidence="1"/>
<dbReference type="EMBL" id="AE017283">
    <property type="protein sequence ID" value="AAT82771.1"/>
    <property type="molecule type" value="Genomic_DNA"/>
</dbReference>
<dbReference type="SMR" id="Q6A8Z5"/>
<dbReference type="EnsemblBacteria" id="AAT82771">
    <property type="protein sequence ID" value="AAT82771"/>
    <property type="gene ID" value="PPA1019"/>
</dbReference>
<dbReference type="KEGG" id="pac:PPA1019"/>
<dbReference type="eggNOG" id="COG0324">
    <property type="taxonomic scope" value="Bacteria"/>
</dbReference>
<dbReference type="HOGENOM" id="CLU_032616_0_1_11"/>
<dbReference type="Proteomes" id="UP000000603">
    <property type="component" value="Chromosome"/>
</dbReference>
<dbReference type="GO" id="GO:0005524">
    <property type="term" value="F:ATP binding"/>
    <property type="evidence" value="ECO:0007669"/>
    <property type="project" value="UniProtKB-UniRule"/>
</dbReference>
<dbReference type="GO" id="GO:0052381">
    <property type="term" value="F:tRNA dimethylallyltransferase activity"/>
    <property type="evidence" value="ECO:0007669"/>
    <property type="project" value="UniProtKB-UniRule"/>
</dbReference>
<dbReference type="GO" id="GO:0006400">
    <property type="term" value="P:tRNA modification"/>
    <property type="evidence" value="ECO:0007669"/>
    <property type="project" value="TreeGrafter"/>
</dbReference>
<dbReference type="FunFam" id="1.10.20.140:FF:000001">
    <property type="entry name" value="tRNA dimethylallyltransferase"/>
    <property type="match status" value="1"/>
</dbReference>
<dbReference type="Gene3D" id="1.10.20.140">
    <property type="match status" value="1"/>
</dbReference>
<dbReference type="Gene3D" id="3.40.50.300">
    <property type="entry name" value="P-loop containing nucleotide triphosphate hydrolases"/>
    <property type="match status" value="1"/>
</dbReference>
<dbReference type="HAMAP" id="MF_00185">
    <property type="entry name" value="IPP_trans"/>
    <property type="match status" value="1"/>
</dbReference>
<dbReference type="InterPro" id="IPR039657">
    <property type="entry name" value="Dimethylallyltransferase"/>
</dbReference>
<dbReference type="InterPro" id="IPR018022">
    <property type="entry name" value="IPT"/>
</dbReference>
<dbReference type="InterPro" id="IPR027417">
    <property type="entry name" value="P-loop_NTPase"/>
</dbReference>
<dbReference type="NCBIfam" id="TIGR00174">
    <property type="entry name" value="miaA"/>
    <property type="match status" value="1"/>
</dbReference>
<dbReference type="PANTHER" id="PTHR11088">
    <property type="entry name" value="TRNA DIMETHYLALLYLTRANSFERASE"/>
    <property type="match status" value="1"/>
</dbReference>
<dbReference type="PANTHER" id="PTHR11088:SF60">
    <property type="entry name" value="TRNA DIMETHYLALLYLTRANSFERASE"/>
    <property type="match status" value="1"/>
</dbReference>
<dbReference type="Pfam" id="PF01715">
    <property type="entry name" value="IPPT"/>
    <property type="match status" value="1"/>
</dbReference>
<dbReference type="SUPFAM" id="SSF52540">
    <property type="entry name" value="P-loop containing nucleoside triphosphate hydrolases"/>
    <property type="match status" value="1"/>
</dbReference>
<organism>
    <name type="scientific">Cutibacterium acnes (strain DSM 16379 / KPA171202)</name>
    <name type="common">Propionibacterium acnes</name>
    <dbReference type="NCBI Taxonomy" id="267747"/>
    <lineage>
        <taxon>Bacteria</taxon>
        <taxon>Bacillati</taxon>
        <taxon>Actinomycetota</taxon>
        <taxon>Actinomycetes</taxon>
        <taxon>Propionibacteriales</taxon>
        <taxon>Propionibacteriaceae</taxon>
        <taxon>Cutibacterium</taxon>
    </lineage>
</organism>
<feature type="chain" id="PRO_0000163952" description="tRNA dimethylallyltransferase">
    <location>
        <begin position="1"/>
        <end position="319"/>
    </location>
</feature>
<feature type="region of interest" description="Interaction with substrate tRNA" evidence="1">
    <location>
        <begin position="46"/>
        <end position="49"/>
    </location>
</feature>
<feature type="binding site" evidence="1">
    <location>
        <begin position="16"/>
        <end position="23"/>
    </location>
    <ligand>
        <name>ATP</name>
        <dbReference type="ChEBI" id="CHEBI:30616"/>
    </ligand>
</feature>
<feature type="binding site" evidence="1">
    <location>
        <begin position="18"/>
        <end position="23"/>
    </location>
    <ligand>
        <name>substrate</name>
    </ligand>
</feature>
<feature type="site" description="Interaction with substrate tRNA" evidence="1">
    <location>
        <position position="112"/>
    </location>
</feature>
<feature type="site" description="Interaction with substrate tRNA" evidence="1">
    <location>
        <position position="133"/>
    </location>
</feature>
<evidence type="ECO:0000255" key="1">
    <source>
        <dbReference type="HAMAP-Rule" id="MF_00185"/>
    </source>
</evidence>
<proteinExistence type="inferred from homology"/>
<gene>
    <name evidence="1" type="primary">miaA</name>
    <name type="ordered locus">PPA1019</name>
</gene>
<reference key="1">
    <citation type="journal article" date="2004" name="Science">
        <title>The complete genome sequence of Propionibacterium acnes, a commensal of human skin.</title>
        <authorList>
            <person name="Brueggemann H."/>
            <person name="Henne A."/>
            <person name="Hoster F."/>
            <person name="Liesegang H."/>
            <person name="Wiezer A."/>
            <person name="Strittmatter A."/>
            <person name="Hujer S."/>
            <person name="Duerre P."/>
            <person name="Gottschalk G."/>
        </authorList>
    </citation>
    <scope>NUCLEOTIDE SEQUENCE [LARGE SCALE GENOMIC DNA]</scope>
    <source>
        <strain>DSM 16379 / KPA171202</strain>
    </source>
</reference>
<name>MIAA_CUTAK</name>
<accession>Q6A8Z5</accession>